<accession>Q0VSJ3</accession>
<keyword id="KW-1185">Reference proteome</keyword>
<keyword id="KW-0687">Ribonucleoprotein</keyword>
<keyword id="KW-0689">Ribosomal protein</keyword>
<keyword id="KW-0694">RNA-binding</keyword>
<keyword id="KW-0699">rRNA-binding</keyword>
<proteinExistence type="inferred from homology"/>
<name>RL14_ALCBS</name>
<protein>
    <recommendedName>
        <fullName evidence="1">Large ribosomal subunit protein uL14</fullName>
    </recommendedName>
    <alternativeName>
        <fullName evidence="2">50S ribosomal protein L14</fullName>
    </alternativeName>
</protein>
<dbReference type="EMBL" id="AM286690">
    <property type="protein sequence ID" value="CAL15855.1"/>
    <property type="molecule type" value="Genomic_DNA"/>
</dbReference>
<dbReference type="RefSeq" id="WP_007151625.1">
    <property type="nucleotide sequence ID" value="NC_008260.1"/>
</dbReference>
<dbReference type="SMR" id="Q0VSJ3"/>
<dbReference type="STRING" id="393595.ABO_0407"/>
<dbReference type="KEGG" id="abo:ABO_0407"/>
<dbReference type="eggNOG" id="COG0093">
    <property type="taxonomic scope" value="Bacteria"/>
</dbReference>
<dbReference type="HOGENOM" id="CLU_095071_2_1_6"/>
<dbReference type="OrthoDB" id="9806379at2"/>
<dbReference type="Proteomes" id="UP000008871">
    <property type="component" value="Chromosome"/>
</dbReference>
<dbReference type="GO" id="GO:0022625">
    <property type="term" value="C:cytosolic large ribosomal subunit"/>
    <property type="evidence" value="ECO:0007669"/>
    <property type="project" value="TreeGrafter"/>
</dbReference>
<dbReference type="GO" id="GO:0070180">
    <property type="term" value="F:large ribosomal subunit rRNA binding"/>
    <property type="evidence" value="ECO:0007669"/>
    <property type="project" value="TreeGrafter"/>
</dbReference>
<dbReference type="GO" id="GO:0003735">
    <property type="term" value="F:structural constituent of ribosome"/>
    <property type="evidence" value="ECO:0007669"/>
    <property type="project" value="InterPro"/>
</dbReference>
<dbReference type="GO" id="GO:0006412">
    <property type="term" value="P:translation"/>
    <property type="evidence" value="ECO:0007669"/>
    <property type="project" value="UniProtKB-UniRule"/>
</dbReference>
<dbReference type="CDD" id="cd00337">
    <property type="entry name" value="Ribosomal_uL14"/>
    <property type="match status" value="1"/>
</dbReference>
<dbReference type="FunFam" id="2.40.150.20:FF:000001">
    <property type="entry name" value="50S ribosomal protein L14"/>
    <property type="match status" value="1"/>
</dbReference>
<dbReference type="Gene3D" id="2.40.150.20">
    <property type="entry name" value="Ribosomal protein L14"/>
    <property type="match status" value="1"/>
</dbReference>
<dbReference type="HAMAP" id="MF_01367">
    <property type="entry name" value="Ribosomal_uL14"/>
    <property type="match status" value="1"/>
</dbReference>
<dbReference type="InterPro" id="IPR000218">
    <property type="entry name" value="Ribosomal_uL14"/>
</dbReference>
<dbReference type="InterPro" id="IPR005745">
    <property type="entry name" value="Ribosomal_uL14_bac-type"/>
</dbReference>
<dbReference type="InterPro" id="IPR019972">
    <property type="entry name" value="Ribosomal_uL14_CS"/>
</dbReference>
<dbReference type="InterPro" id="IPR036853">
    <property type="entry name" value="Ribosomal_uL14_sf"/>
</dbReference>
<dbReference type="NCBIfam" id="TIGR01067">
    <property type="entry name" value="rplN_bact"/>
    <property type="match status" value="1"/>
</dbReference>
<dbReference type="PANTHER" id="PTHR11761">
    <property type="entry name" value="50S/60S RIBOSOMAL PROTEIN L14/L23"/>
    <property type="match status" value="1"/>
</dbReference>
<dbReference type="PANTHER" id="PTHR11761:SF3">
    <property type="entry name" value="LARGE RIBOSOMAL SUBUNIT PROTEIN UL14M"/>
    <property type="match status" value="1"/>
</dbReference>
<dbReference type="Pfam" id="PF00238">
    <property type="entry name" value="Ribosomal_L14"/>
    <property type="match status" value="1"/>
</dbReference>
<dbReference type="SMART" id="SM01374">
    <property type="entry name" value="Ribosomal_L14"/>
    <property type="match status" value="1"/>
</dbReference>
<dbReference type="SUPFAM" id="SSF50193">
    <property type="entry name" value="Ribosomal protein L14"/>
    <property type="match status" value="1"/>
</dbReference>
<dbReference type="PROSITE" id="PS00049">
    <property type="entry name" value="RIBOSOMAL_L14"/>
    <property type="match status" value="1"/>
</dbReference>
<organism>
    <name type="scientific">Alcanivorax borkumensis (strain ATCC 700651 / DSM 11573 / NCIMB 13689 / SK2)</name>
    <dbReference type="NCBI Taxonomy" id="393595"/>
    <lineage>
        <taxon>Bacteria</taxon>
        <taxon>Pseudomonadati</taxon>
        <taxon>Pseudomonadota</taxon>
        <taxon>Gammaproteobacteria</taxon>
        <taxon>Oceanospirillales</taxon>
        <taxon>Alcanivoracaceae</taxon>
        <taxon>Alcanivorax</taxon>
    </lineage>
</organism>
<comment type="function">
    <text evidence="1">Binds to 23S rRNA. Forms part of two intersubunit bridges in the 70S ribosome.</text>
</comment>
<comment type="subunit">
    <text evidence="1">Part of the 50S ribosomal subunit. Forms a cluster with proteins L3 and L19. In the 70S ribosome, L14 and L19 interact and together make contacts with the 16S rRNA in bridges B5 and B8.</text>
</comment>
<comment type="similarity">
    <text evidence="1">Belongs to the universal ribosomal protein uL14 family.</text>
</comment>
<reference key="1">
    <citation type="journal article" date="2006" name="Nat. Biotechnol.">
        <title>Genome sequence of the ubiquitous hydrocarbon-degrading marine bacterium Alcanivorax borkumensis.</title>
        <authorList>
            <person name="Schneiker S."/>
            <person name="Martins dos Santos V.A.P."/>
            <person name="Bartels D."/>
            <person name="Bekel T."/>
            <person name="Brecht M."/>
            <person name="Buhrmester J."/>
            <person name="Chernikova T.N."/>
            <person name="Denaro R."/>
            <person name="Ferrer M."/>
            <person name="Gertler C."/>
            <person name="Goesmann A."/>
            <person name="Golyshina O.V."/>
            <person name="Kaminski F."/>
            <person name="Khachane A.N."/>
            <person name="Lang S."/>
            <person name="Linke B."/>
            <person name="McHardy A.C."/>
            <person name="Meyer F."/>
            <person name="Nechitaylo T."/>
            <person name="Puehler A."/>
            <person name="Regenhardt D."/>
            <person name="Rupp O."/>
            <person name="Sabirova J.S."/>
            <person name="Selbitschka W."/>
            <person name="Yakimov M.M."/>
            <person name="Timmis K.N."/>
            <person name="Vorhoelter F.-J."/>
            <person name="Weidner S."/>
            <person name="Kaiser O."/>
            <person name="Golyshin P.N."/>
        </authorList>
    </citation>
    <scope>NUCLEOTIDE SEQUENCE [LARGE SCALE GENOMIC DNA]</scope>
    <source>
        <strain>ATCC 700651 / DSM 11573 / NCIMB 13689 / SK2</strain>
    </source>
</reference>
<sequence>MIQTESMLEVADNSGARRVQCIKVLGGSHRRYAGIGDIIKVTVKEAIPRGRVKKGDVMTAVVVRTRKGVRRPDGSLIRFDENAAVLLNNNKAPVGTRIFGPVTRELRTEQFMKIISLAPEVL</sequence>
<feature type="chain" id="PRO_0000266444" description="Large ribosomal subunit protein uL14">
    <location>
        <begin position="1"/>
        <end position="122"/>
    </location>
</feature>
<evidence type="ECO:0000255" key="1">
    <source>
        <dbReference type="HAMAP-Rule" id="MF_01367"/>
    </source>
</evidence>
<evidence type="ECO:0000305" key="2"/>
<gene>
    <name evidence="1" type="primary">rplN</name>
    <name type="ordered locus">ABO_0407</name>
</gene>